<keyword id="KW-0131">Cell cycle</keyword>
<keyword id="KW-0132">Cell division</keyword>
<keyword id="KW-0175">Coiled coil</keyword>
<keyword id="KW-0963">Cytoplasm</keyword>
<keyword id="KW-1185">Reference proteome</keyword>
<keyword id="KW-0717">Septation</keyword>
<evidence type="ECO:0000255" key="1">
    <source>
        <dbReference type="HAMAP-Rule" id="MF_01196"/>
    </source>
</evidence>
<proteinExistence type="inferred from homology"/>
<comment type="function">
    <text evidence="1">Non-essential, abundant cell division factor that is required for proper Z-ring formation. It is recruited early to the divisome by direct interaction with FtsZ, stimulating Z-ring assembly and thereby promoting cell division earlier in the cell cycle. Its recruitment to the Z-ring requires functional FtsA or ZipA.</text>
</comment>
<comment type="subunit">
    <text evidence="1">Homodimer. The ends of the coiled-coil dimer bind to each other, forming polymers. Interacts with FtsZ.</text>
</comment>
<comment type="subcellular location">
    <subcellularLocation>
        <location>Cytoplasm</location>
    </subcellularLocation>
    <text evidence="1">Localizes to the septum at mid-cell, in a FtsZ-like pattern.</text>
</comment>
<comment type="similarity">
    <text evidence="1">Belongs to the ZapB family.</text>
</comment>
<sequence>MSLELLSQLETKIQATLENIELLKMELEEEKQKSTQLAEKNQKLQQDLNSWSDKVNGLVGLLNSEI</sequence>
<accession>Q12SJ3</accession>
<reference key="1">
    <citation type="submission" date="2006-03" db="EMBL/GenBank/DDBJ databases">
        <title>Complete sequence of Shewanella denitrificans OS217.</title>
        <authorList>
            <consortium name="US DOE Joint Genome Institute"/>
            <person name="Copeland A."/>
            <person name="Lucas S."/>
            <person name="Lapidus A."/>
            <person name="Barry K."/>
            <person name="Detter J.C."/>
            <person name="Glavina del Rio T."/>
            <person name="Hammon N."/>
            <person name="Israni S."/>
            <person name="Dalin E."/>
            <person name="Tice H."/>
            <person name="Pitluck S."/>
            <person name="Brettin T."/>
            <person name="Bruce D."/>
            <person name="Han C."/>
            <person name="Tapia R."/>
            <person name="Gilna P."/>
            <person name="Kiss H."/>
            <person name="Schmutz J."/>
            <person name="Larimer F."/>
            <person name="Land M."/>
            <person name="Hauser L."/>
            <person name="Kyrpides N."/>
            <person name="Lykidis A."/>
            <person name="Richardson P."/>
        </authorList>
    </citation>
    <scope>NUCLEOTIDE SEQUENCE [LARGE SCALE GENOMIC DNA]</scope>
    <source>
        <strain>OS217 / ATCC BAA-1090 / DSM 15013</strain>
    </source>
</reference>
<organism>
    <name type="scientific">Shewanella denitrificans (strain OS217 / ATCC BAA-1090 / DSM 15013)</name>
    <dbReference type="NCBI Taxonomy" id="318161"/>
    <lineage>
        <taxon>Bacteria</taxon>
        <taxon>Pseudomonadati</taxon>
        <taxon>Pseudomonadota</taxon>
        <taxon>Gammaproteobacteria</taxon>
        <taxon>Alteromonadales</taxon>
        <taxon>Shewanellaceae</taxon>
        <taxon>Shewanella</taxon>
    </lineage>
</organism>
<protein>
    <recommendedName>
        <fullName evidence="1">Cell division protein ZapB</fullName>
    </recommendedName>
</protein>
<feature type="chain" id="PRO_0000333924" description="Cell division protein ZapB">
    <location>
        <begin position="1"/>
        <end position="66"/>
    </location>
</feature>
<feature type="coiled-coil region" evidence="1">
    <location>
        <begin position="3"/>
        <end position="59"/>
    </location>
</feature>
<gene>
    <name evidence="1" type="primary">zapB</name>
    <name type="ordered locus">Sden_0287</name>
</gene>
<dbReference type="EMBL" id="CP000302">
    <property type="protein sequence ID" value="ABE53583.1"/>
    <property type="molecule type" value="Genomic_DNA"/>
</dbReference>
<dbReference type="RefSeq" id="WP_011494750.1">
    <property type="nucleotide sequence ID" value="NC_007954.1"/>
</dbReference>
<dbReference type="SMR" id="Q12SJ3"/>
<dbReference type="STRING" id="318161.Sden_0287"/>
<dbReference type="KEGG" id="sdn:Sden_0287"/>
<dbReference type="eggNOG" id="COG3074">
    <property type="taxonomic scope" value="Bacteria"/>
</dbReference>
<dbReference type="HOGENOM" id="CLU_171174_1_0_6"/>
<dbReference type="OrthoDB" id="6554593at2"/>
<dbReference type="Proteomes" id="UP000001982">
    <property type="component" value="Chromosome"/>
</dbReference>
<dbReference type="GO" id="GO:0005737">
    <property type="term" value="C:cytoplasm"/>
    <property type="evidence" value="ECO:0007669"/>
    <property type="project" value="UniProtKB-SubCell"/>
</dbReference>
<dbReference type="GO" id="GO:0000917">
    <property type="term" value="P:division septum assembly"/>
    <property type="evidence" value="ECO:0007669"/>
    <property type="project" value="UniProtKB-KW"/>
</dbReference>
<dbReference type="GO" id="GO:0043093">
    <property type="term" value="P:FtsZ-dependent cytokinesis"/>
    <property type="evidence" value="ECO:0007669"/>
    <property type="project" value="UniProtKB-UniRule"/>
</dbReference>
<dbReference type="Gene3D" id="1.20.5.340">
    <property type="match status" value="1"/>
</dbReference>
<dbReference type="HAMAP" id="MF_01196">
    <property type="entry name" value="ZapB"/>
    <property type="match status" value="1"/>
</dbReference>
<dbReference type="InterPro" id="IPR009252">
    <property type="entry name" value="Cell_div_ZapB"/>
</dbReference>
<dbReference type="Pfam" id="PF06005">
    <property type="entry name" value="ZapB"/>
    <property type="match status" value="1"/>
</dbReference>
<name>ZAPB_SHEDO</name>